<reference key="1">
    <citation type="journal article" date="2006" name="Proc. Natl. Acad. Sci. U.S.A.">
        <title>Comparative genomics of the lactic acid bacteria.</title>
        <authorList>
            <person name="Makarova K.S."/>
            <person name="Slesarev A."/>
            <person name="Wolf Y.I."/>
            <person name="Sorokin A."/>
            <person name="Mirkin B."/>
            <person name="Koonin E.V."/>
            <person name="Pavlov A."/>
            <person name="Pavlova N."/>
            <person name="Karamychev V."/>
            <person name="Polouchine N."/>
            <person name="Shakhova V."/>
            <person name="Grigoriev I."/>
            <person name="Lou Y."/>
            <person name="Rohksar D."/>
            <person name="Lucas S."/>
            <person name="Huang K."/>
            <person name="Goodstein D.M."/>
            <person name="Hawkins T."/>
            <person name="Plengvidhya V."/>
            <person name="Welker D."/>
            <person name="Hughes J."/>
            <person name="Goh Y."/>
            <person name="Benson A."/>
            <person name="Baldwin K."/>
            <person name="Lee J.-H."/>
            <person name="Diaz-Muniz I."/>
            <person name="Dosti B."/>
            <person name="Smeianov V."/>
            <person name="Wechter W."/>
            <person name="Barabote R."/>
            <person name="Lorca G."/>
            <person name="Altermann E."/>
            <person name="Barrangou R."/>
            <person name="Ganesan B."/>
            <person name="Xie Y."/>
            <person name="Rawsthorne H."/>
            <person name="Tamir D."/>
            <person name="Parker C."/>
            <person name="Breidt F."/>
            <person name="Broadbent J.R."/>
            <person name="Hutkins R."/>
            <person name="O'Sullivan D."/>
            <person name="Steele J."/>
            <person name="Unlu G."/>
            <person name="Saier M.H. Jr."/>
            <person name="Klaenhammer T."/>
            <person name="Richardson P."/>
            <person name="Kozyavkin S."/>
            <person name="Weimer B.C."/>
            <person name="Mills D.A."/>
        </authorList>
    </citation>
    <scope>NUCLEOTIDE SEQUENCE [LARGE SCALE GENOMIC DNA]</scope>
    <source>
        <strain>ATCC BAA-331 / PSU-1</strain>
    </source>
</reference>
<gene>
    <name evidence="1" type="primary">ybeY</name>
    <name type="ordered locus">OEOE_0987</name>
</gene>
<organism>
    <name type="scientific">Oenococcus oeni (strain ATCC BAA-331 / PSU-1)</name>
    <dbReference type="NCBI Taxonomy" id="203123"/>
    <lineage>
        <taxon>Bacteria</taxon>
        <taxon>Bacillati</taxon>
        <taxon>Bacillota</taxon>
        <taxon>Bacilli</taxon>
        <taxon>Lactobacillales</taxon>
        <taxon>Lactobacillaceae</taxon>
        <taxon>Oenococcus</taxon>
    </lineage>
</organism>
<comment type="function">
    <text evidence="1">Single strand-specific metallo-endoribonuclease involved in late-stage 70S ribosome quality control and in maturation of the 3' terminus of the 16S rRNA.</text>
</comment>
<comment type="cofactor">
    <cofactor evidence="1">
        <name>Zn(2+)</name>
        <dbReference type="ChEBI" id="CHEBI:29105"/>
    </cofactor>
    <text evidence="1">Binds 1 zinc ion.</text>
</comment>
<comment type="subcellular location">
    <subcellularLocation>
        <location evidence="1">Cytoplasm</location>
    </subcellularLocation>
</comment>
<comment type="similarity">
    <text evidence="1">Belongs to the endoribonuclease YbeY family.</text>
</comment>
<name>YBEY_OENOB</name>
<accession>Q04F76</accession>
<dbReference type="EC" id="3.1.-.-" evidence="1"/>
<dbReference type="EMBL" id="CP000411">
    <property type="protein sequence ID" value="ABJ56896.1"/>
    <property type="molecule type" value="Genomic_DNA"/>
</dbReference>
<dbReference type="RefSeq" id="WP_002820480.1">
    <property type="nucleotide sequence ID" value="NC_008528.1"/>
</dbReference>
<dbReference type="SMR" id="Q04F76"/>
<dbReference type="STRING" id="203123.OEOE_0987"/>
<dbReference type="GeneID" id="75065940"/>
<dbReference type="KEGG" id="ooe:OEOE_0987"/>
<dbReference type="eggNOG" id="COG0319">
    <property type="taxonomic scope" value="Bacteria"/>
</dbReference>
<dbReference type="HOGENOM" id="CLU_106710_3_0_9"/>
<dbReference type="Proteomes" id="UP000000774">
    <property type="component" value="Chromosome"/>
</dbReference>
<dbReference type="GO" id="GO:0005737">
    <property type="term" value="C:cytoplasm"/>
    <property type="evidence" value="ECO:0007669"/>
    <property type="project" value="UniProtKB-SubCell"/>
</dbReference>
<dbReference type="GO" id="GO:0004222">
    <property type="term" value="F:metalloendopeptidase activity"/>
    <property type="evidence" value="ECO:0007669"/>
    <property type="project" value="InterPro"/>
</dbReference>
<dbReference type="GO" id="GO:0004521">
    <property type="term" value="F:RNA endonuclease activity"/>
    <property type="evidence" value="ECO:0007669"/>
    <property type="project" value="UniProtKB-UniRule"/>
</dbReference>
<dbReference type="GO" id="GO:0008270">
    <property type="term" value="F:zinc ion binding"/>
    <property type="evidence" value="ECO:0007669"/>
    <property type="project" value="UniProtKB-UniRule"/>
</dbReference>
<dbReference type="GO" id="GO:0006364">
    <property type="term" value="P:rRNA processing"/>
    <property type="evidence" value="ECO:0007669"/>
    <property type="project" value="UniProtKB-UniRule"/>
</dbReference>
<dbReference type="Gene3D" id="3.40.390.30">
    <property type="entry name" value="Metalloproteases ('zincins'), catalytic domain"/>
    <property type="match status" value="1"/>
</dbReference>
<dbReference type="HAMAP" id="MF_00009">
    <property type="entry name" value="Endoribonucl_YbeY"/>
    <property type="match status" value="1"/>
</dbReference>
<dbReference type="InterPro" id="IPR023091">
    <property type="entry name" value="MetalPrtase_cat_dom_sf_prd"/>
</dbReference>
<dbReference type="InterPro" id="IPR002036">
    <property type="entry name" value="YbeY"/>
</dbReference>
<dbReference type="InterPro" id="IPR020549">
    <property type="entry name" value="YbeY_CS"/>
</dbReference>
<dbReference type="NCBIfam" id="TIGR00043">
    <property type="entry name" value="rRNA maturation RNase YbeY"/>
    <property type="match status" value="1"/>
</dbReference>
<dbReference type="PANTHER" id="PTHR46986">
    <property type="entry name" value="ENDORIBONUCLEASE YBEY, CHLOROPLASTIC"/>
    <property type="match status" value="1"/>
</dbReference>
<dbReference type="PANTHER" id="PTHR46986:SF1">
    <property type="entry name" value="ENDORIBONUCLEASE YBEY, CHLOROPLASTIC"/>
    <property type="match status" value="1"/>
</dbReference>
<dbReference type="Pfam" id="PF02130">
    <property type="entry name" value="YbeY"/>
    <property type="match status" value="1"/>
</dbReference>
<dbReference type="SUPFAM" id="SSF55486">
    <property type="entry name" value="Metalloproteases ('zincins'), catalytic domain"/>
    <property type="match status" value="1"/>
</dbReference>
<dbReference type="PROSITE" id="PS01306">
    <property type="entry name" value="UPF0054"/>
    <property type="match status" value="1"/>
</dbReference>
<proteinExistence type="inferred from homology"/>
<protein>
    <recommendedName>
        <fullName evidence="1">Endoribonuclease YbeY</fullName>
        <ecNumber evidence="1">3.1.-.-</ecNumber>
    </recommendedName>
</protein>
<feature type="chain" id="PRO_0000284261" description="Endoribonuclease YbeY">
    <location>
        <begin position="1"/>
        <end position="153"/>
    </location>
</feature>
<feature type="binding site" evidence="1">
    <location>
        <position position="118"/>
    </location>
    <ligand>
        <name>Zn(2+)</name>
        <dbReference type="ChEBI" id="CHEBI:29105"/>
        <note>catalytic</note>
    </ligand>
</feature>
<feature type="binding site" evidence="1">
    <location>
        <position position="122"/>
    </location>
    <ligand>
        <name>Zn(2+)</name>
        <dbReference type="ChEBI" id="CHEBI:29105"/>
        <note>catalytic</note>
    </ligand>
</feature>
<feature type="binding site" evidence="1">
    <location>
        <position position="128"/>
    </location>
    <ligand>
        <name>Zn(2+)</name>
        <dbReference type="ChEBI" id="CHEBI:29105"/>
        <note>catalytic</note>
    </ligand>
</feature>
<evidence type="ECO:0000255" key="1">
    <source>
        <dbReference type="HAMAP-Rule" id="MF_00009"/>
    </source>
</evidence>
<sequence>MLDVIVLDDKQKELDNDDAKLVKKVLAFAFDFMQLKQNYEMSVNFVNDEKIHQINKEYRNTDRATDVISFALEESDRIHIDGVAEELGDLFISLDHAHAQAEEYLHSYNRELAYLAVHGFLHLLGYDHTRSQAAEDEMFGLQDKILEGYGLTK</sequence>
<keyword id="KW-0963">Cytoplasm</keyword>
<keyword id="KW-0255">Endonuclease</keyword>
<keyword id="KW-0378">Hydrolase</keyword>
<keyword id="KW-0479">Metal-binding</keyword>
<keyword id="KW-0540">Nuclease</keyword>
<keyword id="KW-1185">Reference proteome</keyword>
<keyword id="KW-0690">Ribosome biogenesis</keyword>
<keyword id="KW-0698">rRNA processing</keyword>
<keyword id="KW-0862">Zinc</keyword>